<feature type="chain" id="PRO_1000052623" description="Large ribosomal subunit protein uL22">
    <location>
        <begin position="1"/>
        <end position="109"/>
    </location>
</feature>
<sequence>METRATLRGVRLSVDKGRLVADLIRGKKVDQALNILNFTQKKAAGIIKKVVESAIANAEHNDGADIDELRVKTIYVEQGATLKRFSARAKGRGNSISKPTCHVYVVVGN</sequence>
<proteinExistence type="inferred from homology"/>
<name>RL22_POLNA</name>
<gene>
    <name evidence="1" type="primary">rplV</name>
    <name type="ordered locus">Pnap_0208</name>
</gene>
<protein>
    <recommendedName>
        <fullName evidence="1">Large ribosomal subunit protein uL22</fullName>
    </recommendedName>
    <alternativeName>
        <fullName evidence="2">50S ribosomal protein L22</fullName>
    </alternativeName>
</protein>
<evidence type="ECO:0000255" key="1">
    <source>
        <dbReference type="HAMAP-Rule" id="MF_01331"/>
    </source>
</evidence>
<evidence type="ECO:0000305" key="2"/>
<organism>
    <name type="scientific">Polaromonas naphthalenivorans (strain CJ2)</name>
    <dbReference type="NCBI Taxonomy" id="365044"/>
    <lineage>
        <taxon>Bacteria</taxon>
        <taxon>Pseudomonadati</taxon>
        <taxon>Pseudomonadota</taxon>
        <taxon>Betaproteobacteria</taxon>
        <taxon>Burkholderiales</taxon>
        <taxon>Comamonadaceae</taxon>
        <taxon>Polaromonas</taxon>
    </lineage>
</organism>
<reference key="1">
    <citation type="journal article" date="2009" name="Environ. Microbiol.">
        <title>The genome of Polaromonas naphthalenivorans strain CJ2, isolated from coal tar-contaminated sediment, reveals physiological and metabolic versatility and evolution through extensive horizontal gene transfer.</title>
        <authorList>
            <person name="Yagi J.M."/>
            <person name="Sims D."/>
            <person name="Brettin T."/>
            <person name="Bruce D."/>
            <person name="Madsen E.L."/>
        </authorList>
    </citation>
    <scope>NUCLEOTIDE SEQUENCE [LARGE SCALE GENOMIC DNA]</scope>
    <source>
        <strain>CJ2</strain>
    </source>
</reference>
<dbReference type="EMBL" id="CP000529">
    <property type="protein sequence ID" value="ABM35533.1"/>
    <property type="molecule type" value="Genomic_DNA"/>
</dbReference>
<dbReference type="RefSeq" id="WP_011799641.1">
    <property type="nucleotide sequence ID" value="NC_008781.1"/>
</dbReference>
<dbReference type="SMR" id="A1VIQ5"/>
<dbReference type="STRING" id="365044.Pnap_0208"/>
<dbReference type="KEGG" id="pna:Pnap_0208"/>
<dbReference type="eggNOG" id="COG0091">
    <property type="taxonomic scope" value="Bacteria"/>
</dbReference>
<dbReference type="HOGENOM" id="CLU_083987_3_3_4"/>
<dbReference type="OrthoDB" id="9805969at2"/>
<dbReference type="Proteomes" id="UP000000644">
    <property type="component" value="Chromosome"/>
</dbReference>
<dbReference type="GO" id="GO:0022625">
    <property type="term" value="C:cytosolic large ribosomal subunit"/>
    <property type="evidence" value="ECO:0007669"/>
    <property type="project" value="TreeGrafter"/>
</dbReference>
<dbReference type="GO" id="GO:0019843">
    <property type="term" value="F:rRNA binding"/>
    <property type="evidence" value="ECO:0007669"/>
    <property type="project" value="UniProtKB-UniRule"/>
</dbReference>
<dbReference type="GO" id="GO:0003735">
    <property type="term" value="F:structural constituent of ribosome"/>
    <property type="evidence" value="ECO:0007669"/>
    <property type="project" value="InterPro"/>
</dbReference>
<dbReference type="GO" id="GO:0006412">
    <property type="term" value="P:translation"/>
    <property type="evidence" value="ECO:0007669"/>
    <property type="project" value="UniProtKB-UniRule"/>
</dbReference>
<dbReference type="CDD" id="cd00336">
    <property type="entry name" value="Ribosomal_L22"/>
    <property type="match status" value="1"/>
</dbReference>
<dbReference type="FunFam" id="3.90.470.10:FF:000001">
    <property type="entry name" value="50S ribosomal protein L22"/>
    <property type="match status" value="1"/>
</dbReference>
<dbReference type="Gene3D" id="3.90.470.10">
    <property type="entry name" value="Ribosomal protein L22/L17"/>
    <property type="match status" value="1"/>
</dbReference>
<dbReference type="HAMAP" id="MF_01331_B">
    <property type="entry name" value="Ribosomal_uL22_B"/>
    <property type="match status" value="1"/>
</dbReference>
<dbReference type="InterPro" id="IPR001063">
    <property type="entry name" value="Ribosomal_uL22"/>
</dbReference>
<dbReference type="InterPro" id="IPR005727">
    <property type="entry name" value="Ribosomal_uL22_bac/chlpt-type"/>
</dbReference>
<dbReference type="InterPro" id="IPR047867">
    <property type="entry name" value="Ribosomal_uL22_bac/org-type"/>
</dbReference>
<dbReference type="InterPro" id="IPR018260">
    <property type="entry name" value="Ribosomal_uL22_CS"/>
</dbReference>
<dbReference type="InterPro" id="IPR036394">
    <property type="entry name" value="Ribosomal_uL22_sf"/>
</dbReference>
<dbReference type="NCBIfam" id="TIGR01044">
    <property type="entry name" value="rplV_bact"/>
    <property type="match status" value="1"/>
</dbReference>
<dbReference type="PANTHER" id="PTHR13501">
    <property type="entry name" value="CHLOROPLAST 50S RIBOSOMAL PROTEIN L22-RELATED"/>
    <property type="match status" value="1"/>
</dbReference>
<dbReference type="PANTHER" id="PTHR13501:SF8">
    <property type="entry name" value="LARGE RIBOSOMAL SUBUNIT PROTEIN UL22M"/>
    <property type="match status" value="1"/>
</dbReference>
<dbReference type="Pfam" id="PF00237">
    <property type="entry name" value="Ribosomal_L22"/>
    <property type="match status" value="1"/>
</dbReference>
<dbReference type="SUPFAM" id="SSF54843">
    <property type="entry name" value="Ribosomal protein L22"/>
    <property type="match status" value="1"/>
</dbReference>
<dbReference type="PROSITE" id="PS00464">
    <property type="entry name" value="RIBOSOMAL_L22"/>
    <property type="match status" value="1"/>
</dbReference>
<accession>A1VIQ5</accession>
<keyword id="KW-1185">Reference proteome</keyword>
<keyword id="KW-0687">Ribonucleoprotein</keyword>
<keyword id="KW-0689">Ribosomal protein</keyword>
<keyword id="KW-0694">RNA-binding</keyword>
<keyword id="KW-0699">rRNA-binding</keyword>
<comment type="function">
    <text evidence="1">This protein binds specifically to 23S rRNA; its binding is stimulated by other ribosomal proteins, e.g. L4, L17, and L20. It is important during the early stages of 50S assembly. It makes multiple contacts with different domains of the 23S rRNA in the assembled 50S subunit and ribosome (By similarity).</text>
</comment>
<comment type="function">
    <text evidence="1">The globular domain of the protein is located near the polypeptide exit tunnel on the outside of the subunit, while an extended beta-hairpin is found that lines the wall of the exit tunnel in the center of the 70S ribosome.</text>
</comment>
<comment type="subunit">
    <text evidence="1">Part of the 50S ribosomal subunit.</text>
</comment>
<comment type="similarity">
    <text evidence="1">Belongs to the universal ribosomal protein uL22 family.</text>
</comment>